<gene>
    <name evidence="1" type="primary">trpF</name>
    <name type="ordered locus">LIC_11773</name>
</gene>
<dbReference type="EC" id="5.3.1.24" evidence="1"/>
<dbReference type="EMBL" id="AE016823">
    <property type="protein sequence ID" value="AAS70362.1"/>
    <property type="status" value="ALT_INIT"/>
    <property type="molecule type" value="Genomic_DNA"/>
</dbReference>
<dbReference type="RefSeq" id="WP_001984951.1">
    <property type="nucleotide sequence ID" value="NC_005823.1"/>
</dbReference>
<dbReference type="SMR" id="Q72RH2"/>
<dbReference type="KEGG" id="lic:LIC_11773"/>
<dbReference type="HOGENOM" id="CLU_076364_2_0_12"/>
<dbReference type="UniPathway" id="UPA00035">
    <property type="reaction ID" value="UER00042"/>
</dbReference>
<dbReference type="Proteomes" id="UP000007037">
    <property type="component" value="Chromosome I"/>
</dbReference>
<dbReference type="GO" id="GO:0004640">
    <property type="term" value="F:phosphoribosylanthranilate isomerase activity"/>
    <property type="evidence" value="ECO:0007669"/>
    <property type="project" value="UniProtKB-UniRule"/>
</dbReference>
<dbReference type="GO" id="GO:0000162">
    <property type="term" value="P:L-tryptophan biosynthetic process"/>
    <property type="evidence" value="ECO:0007669"/>
    <property type="project" value="UniProtKB-UniRule"/>
</dbReference>
<dbReference type="CDD" id="cd00405">
    <property type="entry name" value="PRAI"/>
    <property type="match status" value="1"/>
</dbReference>
<dbReference type="Gene3D" id="3.20.20.70">
    <property type="entry name" value="Aldolase class I"/>
    <property type="match status" value="1"/>
</dbReference>
<dbReference type="HAMAP" id="MF_00135">
    <property type="entry name" value="PRAI"/>
    <property type="match status" value="1"/>
</dbReference>
<dbReference type="InterPro" id="IPR013785">
    <property type="entry name" value="Aldolase_TIM"/>
</dbReference>
<dbReference type="InterPro" id="IPR001240">
    <property type="entry name" value="PRAI_dom"/>
</dbReference>
<dbReference type="InterPro" id="IPR011060">
    <property type="entry name" value="RibuloseP-bd_barrel"/>
</dbReference>
<dbReference type="InterPro" id="IPR044643">
    <property type="entry name" value="TrpF_fam"/>
</dbReference>
<dbReference type="PANTHER" id="PTHR42894">
    <property type="entry name" value="N-(5'-PHOSPHORIBOSYL)ANTHRANILATE ISOMERASE"/>
    <property type="match status" value="1"/>
</dbReference>
<dbReference type="PANTHER" id="PTHR42894:SF1">
    <property type="entry name" value="N-(5'-PHOSPHORIBOSYL)ANTHRANILATE ISOMERASE"/>
    <property type="match status" value="1"/>
</dbReference>
<dbReference type="Pfam" id="PF00697">
    <property type="entry name" value="PRAI"/>
    <property type="match status" value="1"/>
</dbReference>
<dbReference type="SUPFAM" id="SSF51366">
    <property type="entry name" value="Ribulose-phoshate binding barrel"/>
    <property type="match status" value="1"/>
</dbReference>
<comment type="catalytic activity">
    <reaction evidence="1">
        <text>N-(5-phospho-beta-D-ribosyl)anthranilate = 1-(2-carboxyphenylamino)-1-deoxy-D-ribulose 5-phosphate</text>
        <dbReference type="Rhea" id="RHEA:21540"/>
        <dbReference type="ChEBI" id="CHEBI:18277"/>
        <dbReference type="ChEBI" id="CHEBI:58613"/>
        <dbReference type="EC" id="5.3.1.24"/>
    </reaction>
</comment>
<comment type="pathway">
    <text evidence="1">Amino-acid biosynthesis; L-tryptophan biosynthesis; L-tryptophan from chorismate: step 3/5.</text>
</comment>
<comment type="similarity">
    <text evidence="1">Belongs to the TrpF family.</text>
</comment>
<comment type="sequence caution" evidence="2">
    <conflict type="erroneous initiation">
        <sequence resource="EMBL-CDS" id="AAS70362"/>
    </conflict>
</comment>
<name>TRPF_LEPIC</name>
<proteinExistence type="inferred from homology"/>
<protein>
    <recommendedName>
        <fullName evidence="1">N-(5'-phosphoribosyl)anthranilate isomerase</fullName>
        <shortName evidence="1">PRAI</shortName>
        <ecNumber evidence="1">5.3.1.24</ecNumber>
    </recommendedName>
</protein>
<feature type="chain" id="PRO_0000154361" description="N-(5'-phosphoribosyl)anthranilate isomerase">
    <location>
        <begin position="1"/>
        <end position="213"/>
    </location>
</feature>
<sequence>MITNSLQKTKVKICGIKDLEIAKICKEEGADYIGFNFVSSSPRKIELSNAQKIVEYYKSEKNSPEIVLLFYQNSFEEIESITSVLDHDLVQWVWDDPLINRKKLLYKRQICSYRVQTQIHDQDLKDIEAEFLILDSYSKGVGGGTGETFNWELISKVKRKFLLAGGLDPSNVVNAIEIVKPFGVDVASGVESSPGIKDPQKVIQFIRNVKSTS</sequence>
<accession>Q72RH2</accession>
<evidence type="ECO:0000255" key="1">
    <source>
        <dbReference type="HAMAP-Rule" id="MF_00135"/>
    </source>
</evidence>
<evidence type="ECO:0000305" key="2"/>
<reference key="1">
    <citation type="journal article" date="2004" name="J. Bacteriol.">
        <title>Comparative genomics of two Leptospira interrogans serovars reveals novel insights into physiology and pathogenesis.</title>
        <authorList>
            <person name="Nascimento A.L.T.O."/>
            <person name="Ko A.I."/>
            <person name="Martins E.A.L."/>
            <person name="Monteiro-Vitorello C.B."/>
            <person name="Ho P.L."/>
            <person name="Haake D.A."/>
            <person name="Verjovski-Almeida S."/>
            <person name="Hartskeerl R.A."/>
            <person name="Marques M.V."/>
            <person name="Oliveira M.C."/>
            <person name="Menck C.F.M."/>
            <person name="Leite L.C.C."/>
            <person name="Carrer H."/>
            <person name="Coutinho L.L."/>
            <person name="Degrave W.M."/>
            <person name="Dellagostin O.A."/>
            <person name="El-Dorry H."/>
            <person name="Ferro E.S."/>
            <person name="Ferro M.I.T."/>
            <person name="Furlan L.R."/>
            <person name="Gamberini M."/>
            <person name="Giglioti E.A."/>
            <person name="Goes-Neto A."/>
            <person name="Goldman G.H."/>
            <person name="Goldman M.H.S."/>
            <person name="Harakava R."/>
            <person name="Jeronimo S.M.B."/>
            <person name="Junqueira-de-Azevedo I.L.M."/>
            <person name="Kimura E.T."/>
            <person name="Kuramae E.E."/>
            <person name="Lemos E.G.M."/>
            <person name="Lemos M.V.F."/>
            <person name="Marino C.L."/>
            <person name="Nunes L.R."/>
            <person name="de Oliveira R.C."/>
            <person name="Pereira G.G."/>
            <person name="Reis M.S."/>
            <person name="Schriefer A."/>
            <person name="Siqueira W.J."/>
            <person name="Sommer P."/>
            <person name="Tsai S.M."/>
            <person name="Simpson A.J.G."/>
            <person name="Ferro J.A."/>
            <person name="Camargo L.E.A."/>
            <person name="Kitajima J.P."/>
            <person name="Setubal J.C."/>
            <person name="Van Sluys M.A."/>
        </authorList>
    </citation>
    <scope>NUCLEOTIDE SEQUENCE [LARGE SCALE GENOMIC DNA]</scope>
    <source>
        <strain>Fiocruz L1-130</strain>
    </source>
</reference>
<keyword id="KW-0028">Amino-acid biosynthesis</keyword>
<keyword id="KW-0057">Aromatic amino acid biosynthesis</keyword>
<keyword id="KW-0413">Isomerase</keyword>
<keyword id="KW-0822">Tryptophan biosynthesis</keyword>
<organism>
    <name type="scientific">Leptospira interrogans serogroup Icterohaemorrhagiae serovar copenhageni (strain Fiocruz L1-130)</name>
    <dbReference type="NCBI Taxonomy" id="267671"/>
    <lineage>
        <taxon>Bacteria</taxon>
        <taxon>Pseudomonadati</taxon>
        <taxon>Spirochaetota</taxon>
        <taxon>Spirochaetia</taxon>
        <taxon>Leptospirales</taxon>
        <taxon>Leptospiraceae</taxon>
        <taxon>Leptospira</taxon>
    </lineage>
</organism>